<feature type="chain" id="PRO_0000312170" description="Rab-like protein 3">
    <location>
        <begin position="1"/>
        <end position="235"/>
    </location>
</feature>
<feature type="region of interest" description="Small GTPase-like">
    <location>
        <begin position="1"/>
        <end position="235"/>
    </location>
</feature>
<feature type="binding site" evidence="2">
    <location>
        <begin position="16"/>
        <end position="21"/>
    </location>
    <ligand>
        <name>GTP</name>
        <dbReference type="ChEBI" id="CHEBI:37565"/>
    </ligand>
</feature>
<feature type="binding site" evidence="2">
    <location>
        <begin position="148"/>
        <end position="150"/>
    </location>
    <ligand>
        <name>GTP</name>
        <dbReference type="ChEBI" id="CHEBI:37565"/>
    </ligand>
</feature>
<feature type="binding site" evidence="2">
    <location>
        <begin position="179"/>
        <end position="180"/>
    </location>
    <ligand>
        <name>GTP</name>
        <dbReference type="ChEBI" id="CHEBI:37565"/>
    </ligand>
</feature>
<proteinExistence type="evidence at transcript level"/>
<dbReference type="EMBL" id="BC073035">
    <property type="protein sequence ID" value="AAH73035.1"/>
    <property type="molecule type" value="mRNA"/>
</dbReference>
<dbReference type="RefSeq" id="NP_001085620.1">
    <property type="nucleotide sequence ID" value="NM_001092151.1"/>
</dbReference>
<dbReference type="SMR" id="Q6GPS4"/>
<dbReference type="DNASU" id="444046"/>
<dbReference type="GeneID" id="444046"/>
<dbReference type="KEGG" id="xla:444046"/>
<dbReference type="AGR" id="Xenbase:XB-GENE-6256255"/>
<dbReference type="CTD" id="444046"/>
<dbReference type="Xenbase" id="XB-GENE-6256255">
    <property type="gene designation" value="rabl3.S"/>
</dbReference>
<dbReference type="OMA" id="HIRFDME"/>
<dbReference type="OrthoDB" id="5914890at2759"/>
<dbReference type="Proteomes" id="UP000186698">
    <property type="component" value="Chromosome 2S"/>
</dbReference>
<dbReference type="Bgee" id="444046">
    <property type="expression patterns" value="Expressed in internal ear and 19 other cell types or tissues"/>
</dbReference>
<dbReference type="GO" id="GO:0005525">
    <property type="term" value="F:GTP binding"/>
    <property type="evidence" value="ECO:0000250"/>
    <property type="project" value="UniProtKB"/>
</dbReference>
<dbReference type="GO" id="GO:0042803">
    <property type="term" value="F:protein homodimerization activity"/>
    <property type="evidence" value="ECO:0000250"/>
    <property type="project" value="UniProtKB"/>
</dbReference>
<dbReference type="GO" id="GO:0030183">
    <property type="term" value="P:B cell differentiation"/>
    <property type="evidence" value="ECO:0000250"/>
    <property type="project" value="UniProtKB"/>
</dbReference>
<dbReference type="GO" id="GO:0001779">
    <property type="term" value="P:natural killer cell differentiation"/>
    <property type="evidence" value="ECO:0000250"/>
    <property type="project" value="UniProtKB"/>
</dbReference>
<dbReference type="GO" id="GO:1903059">
    <property type="term" value="P:regulation of protein lipidation"/>
    <property type="evidence" value="ECO:0000250"/>
    <property type="project" value="UniProtKB"/>
</dbReference>
<dbReference type="GO" id="GO:0046578">
    <property type="term" value="P:regulation of Ras protein signal transduction"/>
    <property type="evidence" value="ECO:0000250"/>
    <property type="project" value="UniProtKB"/>
</dbReference>
<dbReference type="GO" id="GO:0033077">
    <property type="term" value="P:T cell differentiation in thymus"/>
    <property type="evidence" value="ECO:0000250"/>
    <property type="project" value="UniProtKB"/>
</dbReference>
<dbReference type="CDD" id="cd04102">
    <property type="entry name" value="RabL3"/>
    <property type="match status" value="1"/>
</dbReference>
<dbReference type="FunFam" id="3.40.50.300:FF:000525">
    <property type="entry name" value="rab-like protein 3 isoform X1"/>
    <property type="match status" value="1"/>
</dbReference>
<dbReference type="Gene3D" id="3.40.50.300">
    <property type="entry name" value="P-loop containing nucleotide triphosphate hydrolases"/>
    <property type="match status" value="1"/>
</dbReference>
<dbReference type="InterPro" id="IPR027417">
    <property type="entry name" value="P-loop_NTPase"/>
</dbReference>
<dbReference type="PANTHER" id="PTHR24073">
    <property type="entry name" value="DRAB5-RELATED"/>
    <property type="match status" value="1"/>
</dbReference>
<dbReference type="Pfam" id="PF08477">
    <property type="entry name" value="Roc"/>
    <property type="match status" value="1"/>
</dbReference>
<dbReference type="PRINTS" id="PR00449">
    <property type="entry name" value="RASTRNSFRMNG"/>
</dbReference>
<dbReference type="SMART" id="SM00175">
    <property type="entry name" value="RAB"/>
    <property type="match status" value="1"/>
</dbReference>
<dbReference type="SUPFAM" id="SSF52540">
    <property type="entry name" value="P-loop containing nucleoside triphosphate hydrolases"/>
    <property type="match status" value="1"/>
</dbReference>
<dbReference type="PROSITE" id="PS51419">
    <property type="entry name" value="RAB"/>
    <property type="match status" value="1"/>
</dbReference>
<protein>
    <recommendedName>
        <fullName>Rab-like protein 3</fullName>
    </recommendedName>
</protein>
<keyword id="KW-0342">GTP-binding</keyword>
<keyword id="KW-0547">Nucleotide-binding</keyword>
<keyword id="KW-1185">Reference proteome</keyword>
<evidence type="ECO:0000250" key="1">
    <source>
        <dbReference type="UniProtKB" id="Q5HYI8"/>
    </source>
</evidence>
<evidence type="ECO:0000250" key="2">
    <source>
        <dbReference type="UniProtKB" id="Q9D4V7"/>
    </source>
</evidence>
<evidence type="ECO:0000305" key="3"/>
<sequence>MASLDRVKVLVLGDSGVGKSSLVHLLCQNQVLGNPSWTVGCSVDVRLHEYREGTPEEKTYYTELWDVGGSVGSASSVKSTRAVFYNAVNGIILVHDLTNKKSSQNLYRWSLEALNRDLQPMGVLVTNGDYDREQFADNQIPLLVIGTKLDQIPEAKRNEVLTRTAFLAEDFNAEEINLDCTNTRCLAAGSSNAVKLSRFFDKVIEKRYPREGNLIPGFSDRKRFGGGNFKSLHYD</sequence>
<gene>
    <name type="primary">rabl3</name>
</gene>
<organism>
    <name type="scientific">Xenopus laevis</name>
    <name type="common">African clawed frog</name>
    <dbReference type="NCBI Taxonomy" id="8355"/>
    <lineage>
        <taxon>Eukaryota</taxon>
        <taxon>Metazoa</taxon>
        <taxon>Chordata</taxon>
        <taxon>Craniata</taxon>
        <taxon>Vertebrata</taxon>
        <taxon>Euteleostomi</taxon>
        <taxon>Amphibia</taxon>
        <taxon>Batrachia</taxon>
        <taxon>Anura</taxon>
        <taxon>Pipoidea</taxon>
        <taxon>Pipidae</taxon>
        <taxon>Xenopodinae</taxon>
        <taxon>Xenopus</taxon>
        <taxon>Xenopus</taxon>
    </lineage>
</organism>
<accession>Q6GPS4</accession>
<reference key="1">
    <citation type="submission" date="2004-06" db="EMBL/GenBank/DDBJ databases">
        <authorList>
            <consortium name="NIH - Xenopus Gene Collection (XGC) project"/>
        </authorList>
    </citation>
    <scope>NUCLEOTIDE SEQUENCE [LARGE SCALE MRNA]</scope>
    <source>
        <tissue>Ovary</tissue>
    </source>
</reference>
<comment type="function">
    <text evidence="1 2">Required for KRAS signaling regulation and modulation of cell proliferation (By similarity). Regulator of KRAS prenylation, and probably prenylation of other small GTPases (By similarity). Required for lymphocyte development and function (By similarity). Not required for myeloid cell development (By similarity).</text>
</comment>
<comment type="subunit">
    <text evidence="2">Homodimer.</text>
</comment>
<comment type="similarity">
    <text evidence="3">Belongs to the small GTPase superfamily. Rab family.</text>
</comment>
<name>RABL3_XENLA</name>